<organism>
    <name type="scientific">Archaeoglobus fulgidus (strain ATCC 49558 / DSM 4304 / JCM 9628 / NBRC 100126 / VC-16)</name>
    <dbReference type="NCBI Taxonomy" id="224325"/>
    <lineage>
        <taxon>Archaea</taxon>
        <taxon>Methanobacteriati</taxon>
        <taxon>Methanobacteriota</taxon>
        <taxon>Archaeoglobi</taxon>
        <taxon>Archaeoglobales</taxon>
        <taxon>Archaeoglobaceae</taxon>
        <taxon>Archaeoglobus</taxon>
    </lineage>
</organism>
<dbReference type="EMBL" id="AE000782">
    <property type="protein sequence ID" value="AAB90549.1"/>
    <property type="molecule type" value="Genomic_DNA"/>
</dbReference>
<dbReference type="PIR" id="D69336">
    <property type="entry name" value="D69336"/>
</dbReference>
<dbReference type="RefSeq" id="WP_010878195.1">
    <property type="nucleotide sequence ID" value="NC_000917.1"/>
</dbReference>
<dbReference type="STRING" id="224325.AF_0692"/>
<dbReference type="PaxDb" id="224325-AF_0692"/>
<dbReference type="EnsemblBacteria" id="AAB90549">
    <property type="protein sequence ID" value="AAB90549"/>
    <property type="gene ID" value="AF_0692"/>
</dbReference>
<dbReference type="KEGG" id="afu:AF_0692"/>
<dbReference type="eggNOG" id="arCOG04380">
    <property type="taxonomic scope" value="Archaea"/>
</dbReference>
<dbReference type="HOGENOM" id="CLU_887390_0_0_2"/>
<dbReference type="OrthoDB" id="142690at2157"/>
<dbReference type="PhylomeDB" id="O29565"/>
<dbReference type="Proteomes" id="UP000002199">
    <property type="component" value="Chromosome"/>
</dbReference>
<dbReference type="GO" id="GO:0005886">
    <property type="term" value="C:plasma membrane"/>
    <property type="evidence" value="ECO:0007669"/>
    <property type="project" value="UniProtKB-SubCell"/>
</dbReference>
<comment type="subcellular location">
    <subcellularLocation>
        <location evidence="2">Cell membrane</location>
        <topology evidence="2">Multi-pass membrane protein</topology>
    </subcellularLocation>
</comment>
<name>Y692_ARCFU</name>
<gene>
    <name type="ordered locus">AF_0692</name>
</gene>
<protein>
    <recommendedName>
        <fullName>Uncharacterized protein AF_0692</fullName>
    </recommendedName>
</protein>
<keyword id="KW-1003">Cell membrane</keyword>
<keyword id="KW-0472">Membrane</keyword>
<keyword id="KW-1185">Reference proteome</keyword>
<keyword id="KW-0812">Transmembrane</keyword>
<keyword id="KW-1133">Transmembrane helix</keyword>
<sequence length="313" mass="35746">MKALYWLLIGFLSSTLAEVLSSSHPAGVFDAWGIGVIFPLYSLHALVLGGWLFRLGVNWQRLFLFGCVFGMYEAYITKVLWNPYWGPDAFQFLGIYWFQFAVLVFFWHPIFAFILPLLIAEYIYTSSNTLLNAAKQFPLMQKAGKKFALLLAALAGLNQSVNTPPSMFWVALLSFFTILTPSFLLEKRKIEDIMPSGRVLKLLTFALIILYLFWTFALRFDKMGSFSGQLVVWLFYLLLFYLIINIKSCKPESKTSEKKGERRFFAACFLVYLTAFLITSSFKAFPAAMLFLLAGTAYGTIVFASILIKFLMR</sequence>
<proteinExistence type="predicted"/>
<accession>O29565</accession>
<reference key="1">
    <citation type="journal article" date="1997" name="Nature">
        <title>The complete genome sequence of the hyperthermophilic, sulphate-reducing archaeon Archaeoglobus fulgidus.</title>
        <authorList>
            <person name="Klenk H.-P."/>
            <person name="Clayton R.A."/>
            <person name="Tomb J.-F."/>
            <person name="White O."/>
            <person name="Nelson K.E."/>
            <person name="Ketchum K.A."/>
            <person name="Dodson R.J."/>
            <person name="Gwinn M.L."/>
            <person name="Hickey E.K."/>
            <person name="Peterson J.D."/>
            <person name="Richardson D.L."/>
            <person name="Kerlavage A.R."/>
            <person name="Graham D.E."/>
            <person name="Kyrpides N.C."/>
            <person name="Fleischmann R.D."/>
            <person name="Quackenbush J."/>
            <person name="Lee N.H."/>
            <person name="Sutton G.G."/>
            <person name="Gill S.R."/>
            <person name="Kirkness E.F."/>
            <person name="Dougherty B.A."/>
            <person name="McKenney K."/>
            <person name="Adams M.D."/>
            <person name="Loftus B.J."/>
            <person name="Peterson S.N."/>
            <person name="Reich C.I."/>
            <person name="McNeil L.K."/>
            <person name="Badger J.H."/>
            <person name="Glodek A."/>
            <person name="Zhou L."/>
            <person name="Overbeek R."/>
            <person name="Gocayne J.D."/>
            <person name="Weidman J.F."/>
            <person name="McDonald L.A."/>
            <person name="Utterback T.R."/>
            <person name="Cotton M.D."/>
            <person name="Spriggs T."/>
            <person name="Artiach P."/>
            <person name="Kaine B.P."/>
            <person name="Sykes S.M."/>
            <person name="Sadow P.W."/>
            <person name="D'Andrea K.P."/>
            <person name="Bowman C."/>
            <person name="Fujii C."/>
            <person name="Garland S.A."/>
            <person name="Mason T.M."/>
            <person name="Olsen G.J."/>
            <person name="Fraser C.M."/>
            <person name="Smith H.O."/>
            <person name="Woese C.R."/>
            <person name="Venter J.C."/>
        </authorList>
    </citation>
    <scope>NUCLEOTIDE SEQUENCE [LARGE SCALE GENOMIC DNA]</scope>
    <source>
        <strain>ATCC 49558 / DSM 4304 / JCM 9628 / NBRC 100126 / VC-16</strain>
    </source>
</reference>
<feature type="chain" id="PRO_0000127907" description="Uncharacterized protein AF_0692">
    <location>
        <begin position="1"/>
        <end position="313"/>
    </location>
</feature>
<feature type="transmembrane region" description="Helical" evidence="1">
    <location>
        <begin position="31"/>
        <end position="53"/>
    </location>
</feature>
<feature type="transmembrane region" description="Helical" evidence="1">
    <location>
        <begin position="62"/>
        <end position="84"/>
    </location>
</feature>
<feature type="transmembrane region" description="Helical" evidence="1">
    <location>
        <begin position="104"/>
        <end position="126"/>
    </location>
</feature>
<feature type="transmembrane region" description="Helical" evidence="1">
    <location>
        <begin position="147"/>
        <end position="161"/>
    </location>
</feature>
<feature type="transmembrane region" description="Helical" evidence="1">
    <location>
        <begin position="166"/>
        <end position="185"/>
    </location>
</feature>
<feature type="transmembrane region" description="Helical" evidence="1">
    <location>
        <begin position="198"/>
        <end position="220"/>
    </location>
</feature>
<feature type="transmembrane region" description="Helical" evidence="1">
    <location>
        <begin position="225"/>
        <end position="244"/>
    </location>
</feature>
<feature type="transmembrane region" description="Helical" evidence="1">
    <location>
        <begin position="264"/>
        <end position="282"/>
    </location>
</feature>
<feature type="transmembrane region" description="Helical" evidence="1">
    <location>
        <begin position="286"/>
        <end position="308"/>
    </location>
</feature>
<evidence type="ECO:0000255" key="1"/>
<evidence type="ECO:0000305" key="2"/>